<comment type="function">
    <text evidence="3">Catalyzes the hydrolysis of triacylglycerol.</text>
</comment>
<comment type="catalytic activity">
    <reaction evidence="3">
        <text>a triacylglycerol + H2O = a diacylglycerol + a fatty acid + H(+)</text>
        <dbReference type="Rhea" id="RHEA:12044"/>
        <dbReference type="ChEBI" id="CHEBI:15377"/>
        <dbReference type="ChEBI" id="CHEBI:15378"/>
        <dbReference type="ChEBI" id="CHEBI:17855"/>
        <dbReference type="ChEBI" id="CHEBI:18035"/>
        <dbReference type="ChEBI" id="CHEBI:28868"/>
        <dbReference type="EC" id="3.1.1.3"/>
    </reaction>
</comment>
<comment type="cofactor">
    <cofactor evidence="3">
        <name>Ca(2+)</name>
        <dbReference type="ChEBI" id="CHEBI:29108"/>
    </cofactor>
    <text evidence="3">Binds 1 Ca(2+) ion per subunit.</text>
</comment>
<comment type="subunit">
    <text evidence="3">Monomer.</text>
</comment>
<comment type="subcellular location">
    <subcellularLocation>
        <location evidence="3">Secreted</location>
    </subcellularLocation>
</comment>
<comment type="similarity">
    <text evidence="7">Belongs to the AB hydrolase superfamily. Pseudomonas lipase family.</text>
</comment>
<keyword id="KW-0106">Calcium</keyword>
<keyword id="KW-0903">Direct protein sequencing</keyword>
<keyword id="KW-1015">Disulfide bond</keyword>
<keyword id="KW-0378">Hydrolase</keyword>
<keyword id="KW-0442">Lipid degradation</keyword>
<keyword id="KW-0443">Lipid metabolism</keyword>
<keyword id="KW-0479">Metal-binding</keyword>
<keyword id="KW-0964">Secreted</keyword>
<keyword id="KW-0732">Signal</keyword>
<protein>
    <recommendedName>
        <fullName evidence="3">Triacylglycerol lipase</fullName>
        <ecNumber evidence="3">3.1.1.3</ecNumber>
    </recommendedName>
    <alternativeName>
        <fullName evidence="6">Extracellular lipase</fullName>
    </alternativeName>
    <alternativeName>
        <fullName evidence="2">Triacylglycerol ester hydrolase</fullName>
    </alternativeName>
</protein>
<feature type="signal peptide" evidence="5">
    <location>
        <begin position="1"/>
        <end position="44"/>
    </location>
</feature>
<feature type="chain" id="PRO_0000017745" description="Triacylglycerol lipase">
    <location>
        <begin position="45"/>
        <end position="364"/>
    </location>
</feature>
<feature type="domain" description="AB hydrolase-1" evidence="4">
    <location>
        <begin position="54"/>
        <end position="333"/>
    </location>
</feature>
<feature type="active site" description="Nucleophile" evidence="3">
    <location>
        <position position="131"/>
    </location>
</feature>
<feature type="active site" description="Charge relay system" evidence="3">
    <location>
        <position position="308"/>
    </location>
</feature>
<feature type="active site" description="Charge relay system" evidence="3">
    <location>
        <position position="330"/>
    </location>
</feature>
<feature type="binding site" evidence="1">
    <location>
        <position position="61"/>
    </location>
    <ligand>
        <name>substrate</name>
    </ligand>
</feature>
<feature type="binding site" evidence="1">
    <location>
        <position position="132"/>
    </location>
    <ligand>
        <name>substrate</name>
    </ligand>
</feature>
<feature type="binding site" evidence="3">
    <location>
        <position position="286"/>
    </location>
    <ligand>
        <name>Ca(2+)</name>
        <dbReference type="ChEBI" id="CHEBI:29108"/>
    </ligand>
</feature>
<feature type="binding site" evidence="3">
    <location>
        <position position="332"/>
    </location>
    <ligand>
        <name>Ca(2+)</name>
        <dbReference type="ChEBI" id="CHEBI:29108"/>
    </ligand>
</feature>
<feature type="binding site" evidence="3">
    <location>
        <position position="336"/>
    </location>
    <ligand>
        <name>Ca(2+)</name>
        <dbReference type="ChEBI" id="CHEBI:29108"/>
    </ligand>
</feature>
<feature type="binding site" evidence="3">
    <location>
        <position position="340"/>
    </location>
    <ligand>
        <name>Ca(2+)</name>
        <dbReference type="ChEBI" id="CHEBI:29108"/>
    </ligand>
</feature>
<feature type="disulfide bond" evidence="3">
    <location>
        <begin position="234"/>
        <end position="314"/>
    </location>
</feature>
<sequence>MARTMRSRVVAGAVACAMSIAPFAGTTAVMTLATTHAAMAATAPADGYAATRYPIILVHGLSGTDKYAGVVEYWYGIQEDLQQNGATVYVANLSGFQSDDGANGRGEQLLAYVKTVLAATGATKVNLVGHSQGGLTSRYVAAVAPDLVASVTTIGTPHRGSEFADFVQNVLAYDPTGLSSSVIAAFVNVFGILTSSSHNTNQDALAALQTLTTARAATYNQNYPSAGLGAPGSCQTGAPTETVGGNTHLLYSWAGTAIQPTLSVFGITGATDTSTVPLVDLANVLDPSTLALFGTGTVMINRGSGQNDGLVSKCSALYGKVLSTSYKWNHLDEINQLLGVRGAYAEDPVAVIRTHANRLKLAGV</sequence>
<organism>
    <name type="scientific">Pseudomonas sp. (strain KWI-56)</name>
    <dbReference type="NCBI Taxonomy" id="311"/>
    <lineage>
        <taxon>Bacteria</taxon>
        <taxon>Pseudomonadati</taxon>
        <taxon>Pseudomonadota</taxon>
    </lineage>
</organism>
<name>LIP_PSES5</name>
<evidence type="ECO:0000250" key="1">
    <source>
        <dbReference type="UniProtKB" id="P22088"/>
    </source>
</evidence>
<evidence type="ECO:0000250" key="2">
    <source>
        <dbReference type="UniProtKB" id="P26876"/>
    </source>
</evidence>
<evidence type="ECO:0000250" key="3">
    <source>
        <dbReference type="UniProtKB" id="Q05489"/>
    </source>
</evidence>
<evidence type="ECO:0000255" key="4"/>
<evidence type="ECO:0000269" key="5">
    <source>
    </source>
</evidence>
<evidence type="ECO:0000303" key="6">
    <source>
    </source>
</evidence>
<evidence type="ECO:0000305" key="7"/>
<gene>
    <name evidence="6" type="primary">lip</name>
</gene>
<accession>P25275</accession>
<dbReference type="EC" id="3.1.1.3" evidence="3"/>
<dbReference type="EMBL" id="D10069">
    <property type="protein sequence ID" value="BAA00960.1"/>
    <property type="molecule type" value="Genomic_DNA"/>
</dbReference>
<dbReference type="EMBL" id="S77842">
    <property type="protein sequence ID" value="AAC60400.1"/>
    <property type="molecule type" value="Genomic_DNA"/>
</dbReference>
<dbReference type="SMR" id="P25275"/>
<dbReference type="DrugBank" id="DB03999">
    <property type="generic name" value="Butylphosphonate"/>
</dbReference>
<dbReference type="ESTHER" id="psesp-lipas">
    <property type="family name" value="Bacterial_lip_FamI.2"/>
</dbReference>
<dbReference type="GO" id="GO:0005576">
    <property type="term" value="C:extracellular region"/>
    <property type="evidence" value="ECO:0007669"/>
    <property type="project" value="UniProtKB-SubCell"/>
</dbReference>
<dbReference type="GO" id="GO:0046872">
    <property type="term" value="F:metal ion binding"/>
    <property type="evidence" value="ECO:0007669"/>
    <property type="project" value="UniProtKB-KW"/>
</dbReference>
<dbReference type="GO" id="GO:0004806">
    <property type="term" value="F:triacylglycerol lipase activity"/>
    <property type="evidence" value="ECO:0007669"/>
    <property type="project" value="UniProtKB-EC"/>
</dbReference>
<dbReference type="GO" id="GO:0016042">
    <property type="term" value="P:lipid catabolic process"/>
    <property type="evidence" value="ECO:0007669"/>
    <property type="project" value="UniProtKB-KW"/>
</dbReference>
<dbReference type="Gene3D" id="3.40.50.1820">
    <property type="entry name" value="alpha/beta hydrolase"/>
    <property type="match status" value="1"/>
</dbReference>
<dbReference type="InterPro" id="IPR000073">
    <property type="entry name" value="AB_hydrolase_1"/>
</dbReference>
<dbReference type="InterPro" id="IPR029058">
    <property type="entry name" value="AB_hydrolase_fold"/>
</dbReference>
<dbReference type="Pfam" id="PF00561">
    <property type="entry name" value="Abhydrolase_1"/>
    <property type="match status" value="1"/>
</dbReference>
<dbReference type="SUPFAM" id="SSF53474">
    <property type="entry name" value="alpha/beta-Hydrolases"/>
    <property type="match status" value="1"/>
</dbReference>
<dbReference type="PROSITE" id="PS00120">
    <property type="entry name" value="LIPASE_SER"/>
    <property type="match status" value="1"/>
</dbReference>
<proteinExistence type="evidence at protein level"/>
<reference key="1">
    <citation type="journal article" date="1991" name="Agric. Biol. Chem.">
        <title>Cloning, nucleotide sequencing, and expression in Escherichia coli of a lipase and its activator genes from Pseudomonas sp. KWI-56.</title>
        <authorList>
            <person name="Iizumi T."/>
            <person name="Nakamura K."/>
            <person name="Shimada Y."/>
            <person name="Sugihara A."/>
            <person name="Tominaga Y."/>
            <person name="Fukase T."/>
        </authorList>
    </citation>
    <scope>NUCLEOTIDE SEQUENCE [GENOMIC DNA]</scope>
    <scope>PROTEIN SEQUENCE OF 45-47</scope>
</reference>